<accession>P02301</accession>
<evidence type="ECO:0000250" key="1">
    <source>
        <dbReference type="UniProtKB" id="P68431"/>
    </source>
</evidence>
<evidence type="ECO:0000250" key="2">
    <source>
        <dbReference type="UniProtKB" id="P68432"/>
    </source>
</evidence>
<evidence type="ECO:0000250" key="3">
    <source>
        <dbReference type="UniProtKB" id="P68433"/>
    </source>
</evidence>
<evidence type="ECO:0000250" key="4">
    <source>
        <dbReference type="UniProtKB" id="P84243"/>
    </source>
</evidence>
<evidence type="ECO:0000250" key="5">
    <source>
        <dbReference type="UniProtKB" id="Q6NXT2"/>
    </source>
</evidence>
<evidence type="ECO:0000250" key="6">
    <source>
        <dbReference type="UniProtKB" id="Q71DI3"/>
    </source>
</evidence>
<evidence type="ECO:0000256" key="7">
    <source>
        <dbReference type="SAM" id="MobiDB-lite"/>
    </source>
</evidence>
<evidence type="ECO:0000305" key="8"/>
<evidence type="ECO:0000312" key="9">
    <source>
        <dbReference type="MGI" id="MGI:3650546"/>
    </source>
</evidence>
<comment type="function">
    <text>Core component of nucleosome. Nucleosomes wrap and compact DNA into chromatin, limiting DNA accessibility to the cellular machineries which require DNA as a template. Histones thereby play a central role in transcription regulation, DNA repair, DNA replication and chromosomal stability. DNA accessibility is regulated via a complex set of post-translational modifications of histones, also called histone code, and nucleosome remodeling.</text>
</comment>
<comment type="subunit">
    <text>The nucleosome is a histone octamer containing two molecules each of H2A, H2B, H3 and H4 assembled in one H3-H4 heterotetramer and two H2A-H2B heterodimers. The octamer wraps approximately 147 bp of DNA.</text>
</comment>
<comment type="subcellular location">
    <subcellularLocation>
        <location>Nucleus</location>
    </subcellularLocation>
    <subcellularLocation>
        <location>Chromosome</location>
    </subcellularLocation>
</comment>
<comment type="PTM">
    <text evidence="4">Acetylation is generally linked to gene activation. Acetylation on Lys-10 (H3K9ac) impairs methylation at Arg-9 (H3R8me2s). Acetylation on Lys-19 (H3K18ac) and Lys-24 (H3K24ac) favors methylation at Arg-18 (H3R17me). Acetylation at Lys-123 (H3K122ac) by EP300/p300 plays a central role in chromatin structure: localizes at the surface of the histone octamer and stimulates transcription, possibly by promoting nucleosome instability (By similarity).</text>
</comment>
<comment type="PTM">
    <text evidence="4">Citrullination at Arg-9 (H3R8ci) and/or Arg-18 (H3R17ci) by PADI4 impairs methylation and represses transcription.</text>
</comment>
<comment type="PTM">
    <text evidence="3">Butyrylation of histones marks active promoters and competes with histone acetylation. It is present during late spermatogenesis.</text>
</comment>
<comment type="PTM">
    <text evidence="4">Asymmetric dimethylation at Arg-18 (H3R17me2a) by CARM1 is linked to gene activation. Symmetric dimethylation at Arg-9 (H3R8me2s) by PRMT5 is linked to gene repression (By similarity).</text>
</comment>
<comment type="PTM">
    <text evidence="4">Methylation at Lys-5 (H3K4me), Lys-37 and Lys-80 are linked to gene activation. Methylation at Lys-5 (H3K4me) facilitates subsequent acetylation of H3 and H4. Methylation at Lys-80 is associated with DNA double-strand break (DSB) responses and is a specific target for TP53BP1. Methylation at Lys-10 (H3K9me) and Lys-28 (H3K27me) are linked to gene repression. Methylation at Lys-10 (H3K9me) is a specific target for HP1 proteins (CBX1, CBX3 and CBX5) and prevents subsequent phosphorylation at Ser-11 (H3S10ph) and acetylation of H3 and H4. Methylation at Lys-5 (H3K4me) and Lys-80 require preliminary monoubiquitination of H2B at 'Lys-120'. Methylation at Lys-10 (H3K9me) and Lys-28 (H3K27me) are enriched in inactive X chromosome chromatin. Monomethylation at Lys-57 (H3K56me1) by EHMT2/G9A in G1 phase promotes interaction with PCNA and is required for DNA replication (By similarity).</text>
</comment>
<comment type="PTM">
    <text evidence="4">Phosphorylated at Thr-4 (H3T3ph) by HASPIN during prophase and dephosphorylated during anaphase. Phosphorylation at Ser-11 (H3S10ph) by AURKB is crucial for chromosome condensation and cell-cycle progression during mitosis and meiosis. In addition phosphorylation at Ser-11 (H3S10ph) by RPS6KA4 and RPS6KA5 is important during interphase because it enables the transcription of genes following external stimulation, like mitogens, stress, growth factors or UV irradiation and result in the activation of genes, such as c-fos and c-jun. Phosphorylation at Ser-11 (H3S10ph), which is linked to gene activation, prevents methylation at Lys-10 (H3K9me) but facilitates acetylation of H3 and H4. Phosphorylation at Ser-11 (H3S10ph) by AURKB mediates the dissociation of HP1 proteins (CBX1, CBX3 and CBX5) from heterochromatin. Phosphorylation at Ser-11 (H3S10ph) is also an essential regulatory mechanism for neoplastic cell transformation. Phosphorylated at Ser-29 (H3S28ph) by MAP3K20 isoform 1, RPS6KA5 or AURKB during mitosis or upon ultraviolet B irradiation. Phosphorylation at Thr-7 (H3T6ph) by PRKCB is a specific tag for epigenetic transcriptional activation that prevents demethylation of Lys-5 (H3K4me) by LSD1/KDM1A. At centromeres, specifically phosphorylated at Thr-12 (H3T11ph) from prophase to early anaphase, by DAPK3 and PKN1. Phosphorylation at Thr-12 (H3T11ph) by PKN1 or isoform M2 of PKM (PKM2) is a specific tag for epigenetic transcriptional activation that promotes demethylation of Lys-10 (H3K9me) by KDM4C/JMJD2C. Phosphorylation at Tyr-42 (H3Y41ph) by JAK2 promotes exclusion of CBX5 (HP1 alpha) from chromatin (By similarity).</text>
</comment>
<comment type="PTM">
    <text evidence="4">Lysine deamination at Lys-5 (H3K4all) to form allysine is mediated by LOXL2. Allysine formation by LOXL2 only takes place on H3K4me3 and results in gene repression (By similarity).</text>
</comment>
<comment type="PTM">
    <text evidence="1">Succinylation at Lys-80 (H3K79succ) by KAT2A takes place with a maximum frequency around the transcription start sites of genes. It gives a specific tag for epigenetic transcription activation. Desuccinylation at Lys-123 (H3K122succ) by SIRT7 in response to DNA damage promotes chromatin condensation and double-strand breaks (DSBs) repair.</text>
</comment>
<comment type="PTM">
    <text evidence="1">Serine ADP-ribosylation constitutes the primary form of ADP-ribosylation of proteins in response to DNA damage. Serine ADP-ribosylation at Ser-11 (H3S10ADPr) is mutually exclusive with phosphorylation at Ser-11 (H3S10ph) and impairs acetylation at Lys-10 (H3K9ac).</text>
</comment>
<comment type="similarity">
    <text evidence="8">Belongs to the histone H3 family.</text>
</comment>
<feature type="initiator methionine" description="Removed" evidence="8">
    <location>
        <position position="1"/>
    </location>
</feature>
<feature type="chain" id="PRO_0000221252" description="Histone H3.3C">
    <location>
        <begin position="2"/>
        <end position="136"/>
    </location>
</feature>
<feature type="region of interest" description="Disordered" evidence="7">
    <location>
        <begin position="1"/>
        <end position="44"/>
    </location>
</feature>
<feature type="compositionally biased region" description="Polar residues" evidence="7">
    <location>
        <begin position="1"/>
        <end position="10"/>
    </location>
</feature>
<feature type="modified residue" description="Phosphothreonine; by HASPIN" evidence="1">
    <location>
        <position position="4"/>
    </location>
</feature>
<feature type="modified residue" description="Allysine; alternate" evidence="4">
    <location>
        <position position="5"/>
    </location>
</feature>
<feature type="modified residue" description="N6,N6,N6-trimethyllysine; alternate" evidence="1">
    <location>
        <position position="5"/>
    </location>
</feature>
<feature type="modified residue" description="N6,N6-dimethyllysine; alternate" evidence="1">
    <location>
        <position position="5"/>
    </location>
</feature>
<feature type="modified residue" description="N6-(2-hydroxyisobutyryl)lysine; alternate" evidence="1">
    <location>
        <position position="5"/>
    </location>
</feature>
<feature type="modified residue" description="N6-(beta-hydroxybutyryl)lysine; alternate" evidence="3">
    <location>
        <position position="5"/>
    </location>
</feature>
<feature type="modified residue" description="N6-acetyllysine; alternate" evidence="1">
    <location>
        <position position="5"/>
    </location>
</feature>
<feature type="modified residue" description="N6-methyllysine; alternate" evidence="1">
    <location>
        <position position="5"/>
    </location>
</feature>
<feature type="modified residue" description="5-glutamyl dopamine; alternate" evidence="1">
    <location>
        <position position="6"/>
    </location>
</feature>
<feature type="modified residue" description="5-glutamyl serotonin; alternate" evidence="1">
    <location>
        <position position="6"/>
    </location>
</feature>
<feature type="modified residue" description="Phosphothreonine; by PKC" evidence="1">
    <location>
        <position position="7"/>
    </location>
</feature>
<feature type="modified residue" description="Citrulline; alternate" evidence="4">
    <location>
        <position position="9"/>
    </location>
</feature>
<feature type="modified residue" description="Symmetric dimethylarginine; by PRMT5; alternate" evidence="3">
    <location>
        <position position="9"/>
    </location>
</feature>
<feature type="modified residue" description="N6,N6,N6-trimethyllysine; alternate" evidence="2">
    <location>
        <position position="10"/>
    </location>
</feature>
<feature type="modified residue" description="N6,N6-dimethyllysine; alternate" evidence="2">
    <location>
        <position position="10"/>
    </location>
</feature>
<feature type="modified residue" description="N6-(2-hydroxyisobutyryl)lysine; alternate" evidence="1">
    <location>
        <position position="10"/>
    </location>
</feature>
<feature type="modified residue" description="N6-(beta-hydroxybutyryl)lysine; alternate" evidence="3">
    <location>
        <position position="10"/>
    </location>
</feature>
<feature type="modified residue" description="N6-acetyllysine; alternate" evidence="1">
    <location>
        <position position="10"/>
    </location>
</feature>
<feature type="modified residue" description="N6-lactoyllysine; alternate" evidence="1">
    <location>
        <position position="10"/>
    </location>
</feature>
<feature type="modified residue" description="N6-methyllysine; alternate" evidence="2">
    <location>
        <position position="10"/>
    </location>
</feature>
<feature type="modified residue" description="ADP-ribosylserine; alternate" evidence="1">
    <location>
        <position position="11"/>
    </location>
</feature>
<feature type="modified residue" description="Phosphoserine; alternate; by AURKB, AURKC, RPS6KA3, RPS6KA4 and RPS6KA5" evidence="2">
    <location>
        <position position="11"/>
    </location>
</feature>
<feature type="modified residue" description="Phosphothreonine; by PKC" evidence="1">
    <location>
        <position position="12"/>
    </location>
</feature>
<feature type="modified residue" description="N6-(2-hydroxyisobutyryl)lysine; alternate" evidence="1">
    <location>
        <position position="15"/>
    </location>
</feature>
<feature type="modified residue" description="N6-(beta-hydroxybutyryl)lysine; alternate" evidence="3">
    <location>
        <position position="15"/>
    </location>
</feature>
<feature type="modified residue" description="N6-acetyllysine; alternate" evidence="2">
    <location>
        <position position="15"/>
    </location>
</feature>
<feature type="modified residue" description="N6-glutaryllysine; alternate" evidence="4">
    <location>
        <position position="15"/>
    </location>
</feature>
<feature type="modified residue" description="N6-lactoyllysine; alternate" evidence="3">
    <location>
        <position position="15"/>
    </location>
</feature>
<feature type="modified residue" description="N6-succinyllysine; alternate" evidence="1">
    <location>
        <position position="15"/>
    </location>
</feature>
<feature type="modified residue" description="Asymmetric dimethylarginine; by CARM1; alternate" evidence="1">
    <location>
        <position position="18"/>
    </location>
</feature>
<feature type="modified residue" description="Citrulline; alternate" evidence="4">
    <location>
        <position position="18"/>
    </location>
</feature>
<feature type="modified residue" description="N6-(2-hydroxyisobutyryl)lysine; alternate" evidence="1">
    <location>
        <position position="19"/>
    </location>
</feature>
<feature type="modified residue" description="N6-(beta-hydroxybutyryl)lysine; alternate" evidence="3">
    <location>
        <position position="19"/>
    </location>
</feature>
<feature type="modified residue" description="N6-acetyllysine; alternate" evidence="1">
    <location>
        <position position="19"/>
    </location>
</feature>
<feature type="modified residue" description="N6-butyryllysine; alternate" evidence="3">
    <location>
        <position position="19"/>
    </location>
</feature>
<feature type="modified residue" description="N6-glutaryllysine; alternate" evidence="4">
    <location>
        <position position="19"/>
    </location>
</feature>
<feature type="modified residue" description="N6-lactoyllysine; alternate" evidence="1">
    <location>
        <position position="19"/>
    </location>
</feature>
<feature type="modified residue" description="N6-methyllysine; alternate" evidence="1">
    <location>
        <position position="19"/>
    </location>
</feature>
<feature type="modified residue" description="N6-(2-hydroxyisobutyryl)lysine; alternate" evidence="1">
    <location>
        <position position="24"/>
    </location>
</feature>
<feature type="modified residue" description="N6-(beta-hydroxybutyryl)lysine; alternate" evidence="3">
    <location>
        <position position="24"/>
    </location>
</feature>
<feature type="modified residue" description="N6-acetyllysine; alternate" evidence="2">
    <location>
        <position position="24"/>
    </location>
</feature>
<feature type="modified residue" description="N6-butyryllysine; alternate" evidence="3">
    <location>
        <position position="24"/>
    </location>
</feature>
<feature type="modified residue" description="N6-glutaryllysine; alternate" evidence="4">
    <location>
        <position position="24"/>
    </location>
</feature>
<feature type="modified residue" description="N6-lactoyllysine; alternate" evidence="1">
    <location>
        <position position="24"/>
    </location>
</feature>
<feature type="modified residue" description="N6-methyllysine; alternate" evidence="1">
    <location>
        <position position="24"/>
    </location>
</feature>
<feature type="modified residue" description="Citrulline" evidence="4">
    <location>
        <position position="27"/>
    </location>
</feature>
<feature type="modified residue" description="N6,N6,N6-trimethyllysine; alternate" evidence="2">
    <location>
        <position position="28"/>
    </location>
</feature>
<feature type="modified residue" description="N6,N6-dimethyllysine; alternate" evidence="2">
    <location>
        <position position="28"/>
    </location>
</feature>
<feature type="modified residue" description="N6-(2-hydroxyisobutyryl)lysine; alternate" evidence="1">
    <location>
        <position position="28"/>
    </location>
</feature>
<feature type="modified residue" description="N6-acetyllysine; alternate" evidence="1">
    <location>
        <position position="28"/>
    </location>
</feature>
<feature type="modified residue" description="N6-glutaryllysine; alternate" evidence="4">
    <location>
        <position position="28"/>
    </location>
</feature>
<feature type="modified residue" description="N6-lactoyllysine; alternate" evidence="1">
    <location>
        <position position="28"/>
    </location>
</feature>
<feature type="modified residue" description="N6-methyllysine; alternate" evidence="2">
    <location>
        <position position="28"/>
    </location>
</feature>
<feature type="modified residue" description="ADP-ribosylserine; alternate" evidence="1">
    <location>
        <position position="29"/>
    </location>
</feature>
<feature type="modified residue" description="Phosphoserine; alternate; by AURKB, AURKC and RPS6KA5" evidence="2">
    <location>
        <position position="29"/>
    </location>
</feature>
<feature type="modified residue" description="Phosphoserine" evidence="4">
    <location>
        <position position="32"/>
    </location>
</feature>
<feature type="modified residue" description="N6,N6,N6-trimethyllysine; alternate" evidence="1">
    <location>
        <position position="37"/>
    </location>
</feature>
<feature type="modified residue" description="N6,N6-dimethyllysine; alternate" evidence="1">
    <location>
        <position position="37"/>
    </location>
</feature>
<feature type="modified residue" description="N6-(2-hydroxyisobutyryl)lysine; alternate" evidence="1">
    <location>
        <position position="37"/>
    </location>
</feature>
<feature type="modified residue" description="N6-acetyllysine; alternate" evidence="1">
    <location>
        <position position="37"/>
    </location>
</feature>
<feature type="modified residue" description="N6-methyllysine; alternate" evidence="1">
    <location>
        <position position="37"/>
    </location>
</feature>
<feature type="modified residue" description="N6-methyllysine" evidence="1">
    <location>
        <position position="38"/>
    </location>
</feature>
<feature type="modified residue" description="Phosphotyrosine" evidence="1">
    <location>
        <position position="42"/>
    </location>
</feature>
<feature type="modified residue" description="N6,N6,N6-trimethyllysine; alternate" evidence="1">
    <location>
        <position position="57"/>
    </location>
</feature>
<feature type="modified residue" description="N6-(2-hydroxyisobutyryl)lysine; alternate" evidence="1">
    <location>
        <position position="57"/>
    </location>
</feature>
<feature type="modified residue" description="N6-(beta-hydroxybutyryl)lysine; alternate" evidence="3">
    <location>
        <position position="57"/>
    </location>
</feature>
<feature type="modified residue" description="N6-acetyllysine; alternate" evidence="1">
    <location>
        <position position="57"/>
    </location>
</feature>
<feature type="modified residue" description="N6-glutaryllysine; alternate" evidence="4">
    <location>
        <position position="57"/>
    </location>
</feature>
<feature type="modified residue" description="N6-lactoyllysine; alternate" evidence="3">
    <location>
        <position position="57"/>
    </location>
</feature>
<feature type="modified residue" description="N6-methyllysine; by EHMT2; alternate" evidence="1">
    <location>
        <position position="57"/>
    </location>
</feature>
<feature type="modified residue" description="N6-succinyllysine; alternate" evidence="1">
    <location>
        <position position="57"/>
    </location>
</feature>
<feature type="modified residue" description="Phosphoserine" evidence="5">
    <location>
        <position position="58"/>
    </location>
</feature>
<feature type="modified residue" description="N6-(2-hydroxyisobutyryl)lysine; alternate" evidence="1">
    <location>
        <position position="65"/>
    </location>
</feature>
<feature type="modified residue" description="N6-methyllysine; alternate" evidence="1">
    <location>
        <position position="65"/>
    </location>
</feature>
<feature type="modified residue" description="N6,N6,N6-trimethyllysine; alternate" evidence="3">
    <location>
        <position position="80"/>
    </location>
</feature>
<feature type="modified residue" description="N6,N6-dimethyllysine; alternate" evidence="1">
    <location>
        <position position="80"/>
    </location>
</feature>
<feature type="modified residue" description="N6-(2-hydroxyisobutyryl)lysine; alternate" evidence="1">
    <location>
        <position position="80"/>
    </location>
</feature>
<feature type="modified residue" description="N6-acetyllysine; alternate" evidence="1">
    <location>
        <position position="80"/>
    </location>
</feature>
<feature type="modified residue" description="N6-glutaryllysine; alternate" evidence="4">
    <location>
        <position position="80"/>
    </location>
</feature>
<feature type="modified residue" description="N6-lactoyllysine; alternate" evidence="1">
    <location>
        <position position="80"/>
    </location>
</feature>
<feature type="modified residue" description="N6-methyllysine; alternate" evidence="1">
    <location>
        <position position="80"/>
    </location>
</feature>
<feature type="modified residue" description="N6-succinyllysine; alternate" evidence="1">
    <location>
        <position position="80"/>
    </location>
</feature>
<feature type="modified residue" description="Phosphothreonine" evidence="5">
    <location>
        <position position="81"/>
    </location>
</feature>
<feature type="modified residue" description="Phosphoserine" evidence="4">
    <location>
        <position position="87"/>
    </location>
</feature>
<feature type="modified residue" description="Phosphothreonine" evidence="6">
    <location>
        <position position="108"/>
    </location>
</feature>
<feature type="modified residue" description="N6-acetyllysine; alternate" evidence="1">
    <location>
        <position position="116"/>
    </location>
</feature>
<feature type="modified residue" description="N6-glutaryllysine; alternate" evidence="4">
    <location>
        <position position="116"/>
    </location>
</feature>
<feature type="modified residue" description="N6-(2-hydroxyisobutyryl)lysine; alternate" evidence="1">
    <location>
        <position position="123"/>
    </location>
</feature>
<feature type="modified residue" description="N6-acetyllysine; alternate" evidence="1">
    <location>
        <position position="123"/>
    </location>
</feature>
<feature type="modified residue" description="N6-glutaryllysine; alternate" evidence="4">
    <location>
        <position position="123"/>
    </location>
</feature>
<feature type="modified residue" description="N6-methyllysine; alternate" evidence="1">
    <location>
        <position position="123"/>
    </location>
</feature>
<feature type="modified residue" description="N6-succinyllysine; alternate" evidence="1">
    <location>
        <position position="123"/>
    </location>
</feature>
<feature type="sequence conflict" description="In Ref. 1; CAA24131." evidence="8" ref="1">
    <original>L</original>
    <variation>H</variation>
    <location>
        <position position="3"/>
    </location>
</feature>
<feature type="sequence conflict" description="In Ref. 1; CAA24131." evidence="8" ref="1">
    <original>G</original>
    <variation>C</variation>
    <location>
        <position position="13"/>
    </location>
</feature>
<feature type="sequence conflict" description="In Ref. 1; CAA24131." evidence="8" ref="1">
    <original>T</original>
    <variation>A</variation>
    <location>
        <position position="26"/>
    </location>
</feature>
<feature type="sequence conflict" description="In Ref. 1; CAA24131." evidence="8" ref="1">
    <original>P</original>
    <variation>S</variation>
    <location>
        <position position="39"/>
    </location>
</feature>
<feature type="sequence conflict" description="In Ref. 1; CAA24131." evidence="8" ref="1">
    <original>G</original>
    <variation>D</variation>
    <location>
        <position position="45"/>
    </location>
</feature>
<feature type="sequence conflict" description="In Ref. 1; CAA24131." evidence="8" ref="1">
    <original>R</original>
    <variation>L</variation>
    <location>
        <position position="50"/>
    </location>
</feature>
<feature type="sequence conflict" description="In Ref. 1; CAA24131." evidence="8" ref="1">
    <original>QK</original>
    <variation>H</variation>
    <location>
        <begin position="56"/>
        <end position="57"/>
    </location>
</feature>
<feature type="sequence conflict" description="In Ref. 1; CAA24131." evidence="8" ref="1">
    <original>R</original>
    <variation>H</variation>
    <location>
        <position position="64"/>
    </location>
</feature>
<feature type="sequence conflict" description="In Ref. 1; CAA24131." evidence="8" ref="1">
    <original>R</original>
    <variation>Q</variation>
    <location>
        <position position="73"/>
    </location>
</feature>
<feature type="sequence conflict" description="In Ref. 1; CAA24131." evidence="8" ref="1">
    <original>YL</original>
    <variation>NR</variation>
    <location>
        <begin position="100"/>
        <end position="101"/>
    </location>
</feature>
<feature type="sequence conflict" description="In Ref. 1; CAA24131." evidence="8" ref="1">
    <original>R</original>
    <variation>C</variation>
    <location>
        <position position="117"/>
    </location>
</feature>
<feature type="sequence conflict" description="In Ref. 1; CAA24131." evidence="8" ref="1">
    <original>IM</original>
    <variation>VI</variation>
    <location>
        <begin position="120"/>
        <end position="121"/>
    </location>
</feature>
<feature type="sequence conflict" description="In Ref. 1; CAA24131." evidence="8" ref="1">
    <original>RRIR</original>
    <variation>HSIL</variation>
    <location>
        <begin position="129"/>
        <end position="132"/>
    </location>
</feature>
<keyword id="KW-0007">Acetylation</keyword>
<keyword id="KW-0013">ADP-ribosylation</keyword>
<keyword id="KW-0158">Chromosome</keyword>
<keyword id="KW-0164">Citrullination</keyword>
<keyword id="KW-0238">DNA-binding</keyword>
<keyword id="KW-0379">Hydroxylation</keyword>
<keyword id="KW-0488">Methylation</keyword>
<keyword id="KW-0544">Nucleosome core</keyword>
<keyword id="KW-0539">Nucleus</keyword>
<keyword id="KW-0597">Phosphoprotein</keyword>
<keyword id="KW-1185">Reference proteome</keyword>
<keyword id="KW-0832">Ubl conjugation</keyword>
<proteinExistence type="inferred from homology"/>
<name>H3C_MOUSE</name>
<sequence length="136" mass="15315">MALTKQTARKSTGGKAPRKQLATKATRKSAPSTGGVKKPHRYRPGTVALREIRRYQKSTELLIRKLPFQRLVREIAQDFKTDLRFQSAAIGALQEASEAYLVGLFEDTNLCAIHAKRVTIMPKDIQLARRIRGERA</sequence>
<gene>
    <name evidence="5" type="primary">H3-5</name>
    <name type="synonym">Gm14384</name>
    <name evidence="9" type="synonym">H3f3c</name>
</gene>
<reference key="1">
    <citation type="journal article" date="1981" name="Proc. Natl. Acad. Sci. U.S.A.">
        <title>Isolation of two clusters of mouse histone genes.</title>
        <authorList>
            <person name="Sittman D.B."/>
            <person name="Chiu I.-M."/>
            <person name="Pan C.-J."/>
            <person name="Cohn R.H."/>
            <person name="Kedes L.H."/>
            <person name="Marzluff W.F. Jr."/>
        </authorList>
    </citation>
    <scope>NUCLEOTIDE SEQUENCE [GENOMIC DNA]</scope>
</reference>
<reference key="2">
    <citation type="journal article" date="2009" name="PLoS Biol.">
        <title>Lineage-specific biology revealed by a finished genome assembly of the mouse.</title>
        <authorList>
            <person name="Church D.M."/>
            <person name="Goodstadt L."/>
            <person name="Hillier L.W."/>
            <person name="Zody M.C."/>
            <person name="Goldstein S."/>
            <person name="She X."/>
            <person name="Bult C.J."/>
            <person name="Agarwala R."/>
            <person name="Cherry J.L."/>
            <person name="DiCuccio M."/>
            <person name="Hlavina W."/>
            <person name="Kapustin Y."/>
            <person name="Meric P."/>
            <person name="Maglott D."/>
            <person name="Birtle Z."/>
            <person name="Marques A.C."/>
            <person name="Graves T."/>
            <person name="Zhou S."/>
            <person name="Teague B."/>
            <person name="Potamousis K."/>
            <person name="Churas C."/>
            <person name="Place M."/>
            <person name="Herschleb J."/>
            <person name="Runnheim R."/>
            <person name="Forrest D."/>
            <person name="Amos-Landgraf J."/>
            <person name="Schwartz D.C."/>
            <person name="Cheng Z."/>
            <person name="Lindblad-Toh K."/>
            <person name="Eichler E.E."/>
            <person name="Ponting C.P."/>
        </authorList>
    </citation>
    <scope>NUCLEOTIDE SEQUENCE [LARGE SCALE GENOMIC DNA]</scope>
    <source>
        <strain>C57BL/6J</strain>
    </source>
</reference>
<organism>
    <name type="scientific">Mus musculus</name>
    <name type="common">Mouse</name>
    <dbReference type="NCBI Taxonomy" id="10090"/>
    <lineage>
        <taxon>Eukaryota</taxon>
        <taxon>Metazoa</taxon>
        <taxon>Chordata</taxon>
        <taxon>Craniata</taxon>
        <taxon>Vertebrata</taxon>
        <taxon>Euteleostomi</taxon>
        <taxon>Mammalia</taxon>
        <taxon>Eutheria</taxon>
        <taxon>Euarchontoglires</taxon>
        <taxon>Glires</taxon>
        <taxon>Rodentia</taxon>
        <taxon>Myomorpha</taxon>
        <taxon>Muroidea</taxon>
        <taxon>Muridae</taxon>
        <taxon>Murinae</taxon>
        <taxon>Mus</taxon>
        <taxon>Mus</taxon>
    </lineage>
</organism>
<dbReference type="EMBL" id="V00754">
    <property type="protein sequence ID" value="CAA24131.1"/>
    <property type="molecule type" value="Genomic_DNA"/>
</dbReference>
<dbReference type="EMBL" id="AL844536">
    <property type="status" value="NOT_ANNOTATED_CDS"/>
    <property type="molecule type" value="Genomic_DNA"/>
</dbReference>
<dbReference type="PIR" id="A02633">
    <property type="entry name" value="HSMS34"/>
</dbReference>
<dbReference type="RefSeq" id="XP_894986.1">
    <property type="nucleotide sequence ID" value="XM_889893.7"/>
</dbReference>
<dbReference type="SMR" id="P02301"/>
<dbReference type="BioGRID" id="551688">
    <property type="interactions" value="4"/>
</dbReference>
<dbReference type="FunCoup" id="P02301">
    <property type="interactions" value="289"/>
</dbReference>
<dbReference type="IntAct" id="P02301">
    <property type="interactions" value="1"/>
</dbReference>
<dbReference type="MINT" id="P02301"/>
<dbReference type="GlyGen" id="P02301">
    <property type="glycosylation" value="1 site, 1 O-linked glycan (1 site)"/>
</dbReference>
<dbReference type="PhosphoSitePlus" id="P02301"/>
<dbReference type="jPOST" id="P02301"/>
<dbReference type="PeptideAtlas" id="P02301"/>
<dbReference type="ProteomicsDB" id="269796"/>
<dbReference type="Pumba" id="P02301"/>
<dbReference type="AGR" id="MGI:3650546"/>
<dbReference type="MGI" id="MGI:3650546">
    <property type="gene designation" value="H3f3c"/>
</dbReference>
<dbReference type="InParanoid" id="P02301"/>
<dbReference type="OrthoDB" id="9609993at2759"/>
<dbReference type="BioGRID-ORCS" id="625328">
    <property type="hits" value="0 hits in 1 CRISPR screen"/>
</dbReference>
<dbReference type="ChiTaRS" id="H3f3c">
    <property type="organism name" value="mouse"/>
</dbReference>
<dbReference type="PRO" id="PR:P02301"/>
<dbReference type="Proteomes" id="UP000000589">
    <property type="component" value="Unplaced"/>
</dbReference>
<dbReference type="RNAct" id="P02301">
    <property type="molecule type" value="protein"/>
</dbReference>
<dbReference type="GO" id="GO:0000794">
    <property type="term" value="C:condensed nuclear chromosome"/>
    <property type="evidence" value="ECO:0000314"/>
    <property type="project" value="MGI"/>
</dbReference>
<dbReference type="GO" id="GO:0000791">
    <property type="term" value="C:euchromatin"/>
    <property type="evidence" value="ECO:0000314"/>
    <property type="project" value="MGI"/>
</dbReference>
<dbReference type="GO" id="GO:0000786">
    <property type="term" value="C:nucleosome"/>
    <property type="evidence" value="ECO:0007669"/>
    <property type="project" value="UniProtKB-KW"/>
</dbReference>
<dbReference type="GO" id="GO:0003677">
    <property type="term" value="F:DNA binding"/>
    <property type="evidence" value="ECO:0007669"/>
    <property type="project" value="UniProtKB-KW"/>
</dbReference>
<dbReference type="GO" id="GO:0046982">
    <property type="term" value="F:protein heterodimerization activity"/>
    <property type="evidence" value="ECO:0007669"/>
    <property type="project" value="InterPro"/>
</dbReference>
<dbReference type="GO" id="GO:0030527">
    <property type="term" value="F:structural constituent of chromatin"/>
    <property type="evidence" value="ECO:0000314"/>
    <property type="project" value="MGI"/>
</dbReference>
<dbReference type="GO" id="GO:0006325">
    <property type="term" value="P:chromatin organization"/>
    <property type="evidence" value="ECO:0000305"/>
    <property type="project" value="MGI"/>
</dbReference>
<dbReference type="CDD" id="cd22911">
    <property type="entry name" value="HFD_H3"/>
    <property type="match status" value="1"/>
</dbReference>
<dbReference type="FunFam" id="1.10.20.10:FF:000078">
    <property type="entry name" value="Histone H3"/>
    <property type="match status" value="1"/>
</dbReference>
<dbReference type="FunFam" id="1.10.20.10:FF:000044">
    <property type="entry name" value="Histone H3.3"/>
    <property type="match status" value="1"/>
</dbReference>
<dbReference type="Gene3D" id="1.10.20.10">
    <property type="entry name" value="Histone, subunit A"/>
    <property type="match status" value="1"/>
</dbReference>
<dbReference type="InterPro" id="IPR009072">
    <property type="entry name" value="Histone-fold"/>
</dbReference>
<dbReference type="InterPro" id="IPR007125">
    <property type="entry name" value="Histone_H2A/H2B/H3"/>
</dbReference>
<dbReference type="InterPro" id="IPR000164">
    <property type="entry name" value="Histone_H3/CENP-A"/>
</dbReference>
<dbReference type="PANTHER" id="PTHR11426">
    <property type="entry name" value="HISTONE H3"/>
    <property type="match status" value="1"/>
</dbReference>
<dbReference type="Pfam" id="PF00125">
    <property type="entry name" value="Histone"/>
    <property type="match status" value="1"/>
</dbReference>
<dbReference type="PRINTS" id="PR00622">
    <property type="entry name" value="HISTONEH3"/>
</dbReference>
<dbReference type="SMART" id="SM00428">
    <property type="entry name" value="H3"/>
    <property type="match status" value="1"/>
</dbReference>
<dbReference type="SUPFAM" id="SSF47113">
    <property type="entry name" value="Histone-fold"/>
    <property type="match status" value="1"/>
</dbReference>
<dbReference type="PROSITE" id="PS00322">
    <property type="entry name" value="HISTONE_H3_1"/>
    <property type="match status" value="1"/>
</dbReference>
<dbReference type="PROSITE" id="PS00959">
    <property type="entry name" value="HISTONE_H3_2"/>
    <property type="match status" value="1"/>
</dbReference>
<protein>
    <recommendedName>
        <fullName>Histone H3.3C</fullName>
    </recommendedName>
    <alternativeName>
        <fullName>Embryonic</fullName>
    </alternativeName>
</protein>